<protein>
    <recommendedName>
        <fullName evidence="2">Cysteine desulfurase</fullName>
        <ecNumber evidence="2">2.8.1.7</ecNumber>
    </recommendedName>
    <alternativeName>
        <fullName evidence="2">Nitrogenase metalloclusters biosynthesis protein NifS</fullName>
    </alternativeName>
</protein>
<reference key="1">
    <citation type="journal article" date="2000" name="J. Bacteriol.">
        <title>Characterization of a major cluster of nif, fix, and associated genes in a sugarcane endophyte, Acetobacter diazotrophicus.</title>
        <authorList>
            <person name="Lee S."/>
            <person name="Reth A."/>
            <person name="Meletzus D."/>
            <person name="Sevilla M."/>
            <person name="Kennedy C."/>
        </authorList>
    </citation>
    <scope>NUCLEOTIDE SEQUENCE [GENOMIC DNA]</scope>
</reference>
<reference key="2">
    <citation type="journal article" date="2009" name="BMC Genomics">
        <title>Complete genome sequence of the sugarcane nitrogen-fixing endophyte Gluconacetobacter diazotrophicus Pal5.</title>
        <authorList>
            <person name="Bertalan M."/>
            <person name="Albano R."/>
            <person name="de Padua V."/>
            <person name="Rouws L."/>
            <person name="Rojas C."/>
            <person name="Hemerly A."/>
            <person name="Teixeira K."/>
            <person name="Schwab S."/>
            <person name="Araujo J."/>
            <person name="Oliveira A."/>
            <person name="Franca L."/>
            <person name="Magalhaes V."/>
            <person name="Alqueres S."/>
            <person name="Cardoso A."/>
            <person name="Almeida W."/>
            <person name="Loureiro M.M."/>
            <person name="Nogueira E."/>
            <person name="Cidade D."/>
            <person name="Oliveira D."/>
            <person name="Simao T."/>
            <person name="Macedo J."/>
            <person name="Valadao A."/>
            <person name="Dreschsel M."/>
            <person name="Freitas F."/>
            <person name="Vidal M."/>
            <person name="Guedes H."/>
            <person name="Rodrigues E."/>
            <person name="Meneses C."/>
            <person name="Brioso P."/>
            <person name="Pozzer L."/>
            <person name="Figueiredo D."/>
            <person name="Montano H."/>
            <person name="Junior J."/>
            <person name="de Souza Filho G."/>
            <person name="Martin Quintana Flores V."/>
            <person name="Ferreira B."/>
            <person name="Branco A."/>
            <person name="Gonzalez P."/>
            <person name="Guillobel H."/>
            <person name="Lemos M."/>
            <person name="Seibel L."/>
            <person name="Macedo J."/>
            <person name="Alves-Ferreira M."/>
            <person name="Sachetto-Martins G."/>
            <person name="Coelho A."/>
            <person name="Santos E."/>
            <person name="Amaral G."/>
            <person name="Neves A."/>
            <person name="Pacheco A.B."/>
            <person name="Carvalho D."/>
            <person name="Lery L."/>
            <person name="Bisch P."/>
            <person name="Rossle S.C."/>
            <person name="Urmenyi T."/>
            <person name="Rael Pereira A."/>
            <person name="Silva R."/>
            <person name="Rondinelli E."/>
            <person name="von Kruger W."/>
            <person name="Martins O."/>
            <person name="Baldani J.I."/>
            <person name="Ferreira P.C."/>
        </authorList>
    </citation>
    <scope>NUCLEOTIDE SEQUENCE [LARGE SCALE GENOMIC DNA]</scope>
    <source>
        <strain>ATCC 49037 / DSM 5601 / CCUG 37298 / CIP 103539 / LMG 7603 / PAl5</strain>
    </source>
</reference>
<reference key="3">
    <citation type="journal article" date="2010" name="Stand. Genomic Sci.">
        <title>Two genome sequences of the same bacterial strain, Gluconacetobacter diazotrophicus PAl 5, suggest a new standard in genome sequence submission.</title>
        <authorList>
            <person name="Giongo A."/>
            <person name="Tyler H.L."/>
            <person name="Zipperer U.N."/>
            <person name="Triplett E.W."/>
        </authorList>
    </citation>
    <scope>NUCLEOTIDE SEQUENCE [LARGE SCALE GENOMIC DNA]</scope>
    <source>
        <strain>ATCC 49037 / DSM 5601 / CCUG 37298 / CIP 103539 / LMG 7603 / PAl5</strain>
    </source>
</reference>
<dbReference type="EC" id="2.8.1.7" evidence="2"/>
<dbReference type="EMBL" id="AF030414">
    <property type="protein sequence ID" value="AAG27074.1"/>
    <property type="molecule type" value="Genomic_DNA"/>
</dbReference>
<dbReference type="EMBL" id="AM889285">
    <property type="protein sequence ID" value="CAP54391.1"/>
    <property type="molecule type" value="Genomic_DNA"/>
</dbReference>
<dbReference type="EMBL" id="CP001189">
    <property type="protein sequence ID" value="ACI51337.1"/>
    <property type="molecule type" value="Genomic_DNA"/>
</dbReference>
<dbReference type="RefSeq" id="WP_012222844.1">
    <property type="nucleotide sequence ID" value="NC_010125.1"/>
</dbReference>
<dbReference type="SMR" id="P57794"/>
<dbReference type="STRING" id="272568.GDI0448"/>
<dbReference type="KEGG" id="gdi:GDI0448"/>
<dbReference type="KEGG" id="gdj:Gdia_1558"/>
<dbReference type="eggNOG" id="COG1104">
    <property type="taxonomic scope" value="Bacteria"/>
</dbReference>
<dbReference type="HOGENOM" id="CLU_003433_0_0_5"/>
<dbReference type="OrthoDB" id="9808002at2"/>
<dbReference type="Proteomes" id="UP000001176">
    <property type="component" value="Chromosome"/>
</dbReference>
<dbReference type="GO" id="GO:0031071">
    <property type="term" value="F:cysteine desulfurase activity"/>
    <property type="evidence" value="ECO:0007669"/>
    <property type="project" value="UniProtKB-EC"/>
</dbReference>
<dbReference type="GO" id="GO:0051536">
    <property type="term" value="F:iron-sulfur cluster binding"/>
    <property type="evidence" value="ECO:0007669"/>
    <property type="project" value="UniProtKB-KW"/>
</dbReference>
<dbReference type="GO" id="GO:0046872">
    <property type="term" value="F:metal ion binding"/>
    <property type="evidence" value="ECO:0007669"/>
    <property type="project" value="UniProtKB-KW"/>
</dbReference>
<dbReference type="GO" id="GO:0030170">
    <property type="term" value="F:pyridoxal phosphate binding"/>
    <property type="evidence" value="ECO:0007669"/>
    <property type="project" value="InterPro"/>
</dbReference>
<dbReference type="GO" id="GO:0006520">
    <property type="term" value="P:amino acid metabolic process"/>
    <property type="evidence" value="ECO:0007669"/>
    <property type="project" value="InterPro"/>
</dbReference>
<dbReference type="GO" id="GO:0009399">
    <property type="term" value="P:nitrogen fixation"/>
    <property type="evidence" value="ECO:0007669"/>
    <property type="project" value="UniProtKB-KW"/>
</dbReference>
<dbReference type="FunFam" id="3.40.640.10:FF:000084">
    <property type="entry name" value="IscS-like cysteine desulfurase"/>
    <property type="match status" value="1"/>
</dbReference>
<dbReference type="Gene3D" id="1.10.260.50">
    <property type="match status" value="1"/>
</dbReference>
<dbReference type="Gene3D" id="3.90.1150.10">
    <property type="entry name" value="Aspartate Aminotransferase, domain 1"/>
    <property type="match status" value="1"/>
</dbReference>
<dbReference type="Gene3D" id="3.40.640.10">
    <property type="entry name" value="Type I PLP-dependent aspartate aminotransferase-like (Major domain)"/>
    <property type="match status" value="1"/>
</dbReference>
<dbReference type="InterPro" id="IPR000192">
    <property type="entry name" value="Aminotrans_V_dom"/>
</dbReference>
<dbReference type="InterPro" id="IPR020578">
    <property type="entry name" value="Aminotrans_V_PyrdxlP_BS"/>
</dbReference>
<dbReference type="InterPro" id="IPR017772">
    <property type="entry name" value="Cys_deSase_NifS_bac/arc"/>
</dbReference>
<dbReference type="InterPro" id="IPR016454">
    <property type="entry name" value="Cysteine_dSase"/>
</dbReference>
<dbReference type="InterPro" id="IPR015424">
    <property type="entry name" value="PyrdxlP-dep_Trfase"/>
</dbReference>
<dbReference type="InterPro" id="IPR015421">
    <property type="entry name" value="PyrdxlP-dep_Trfase_major"/>
</dbReference>
<dbReference type="InterPro" id="IPR015422">
    <property type="entry name" value="PyrdxlP-dep_Trfase_small"/>
</dbReference>
<dbReference type="NCBIfam" id="TIGR03402">
    <property type="entry name" value="FeS_nifS"/>
    <property type="match status" value="1"/>
</dbReference>
<dbReference type="PANTHER" id="PTHR11601:SF34">
    <property type="entry name" value="CYSTEINE DESULFURASE"/>
    <property type="match status" value="1"/>
</dbReference>
<dbReference type="PANTHER" id="PTHR11601">
    <property type="entry name" value="CYSTEINE DESULFURYLASE FAMILY MEMBER"/>
    <property type="match status" value="1"/>
</dbReference>
<dbReference type="Pfam" id="PF00266">
    <property type="entry name" value="Aminotran_5"/>
    <property type="match status" value="1"/>
</dbReference>
<dbReference type="PIRSF" id="PIRSF005572">
    <property type="entry name" value="NifS"/>
    <property type="match status" value="1"/>
</dbReference>
<dbReference type="SUPFAM" id="SSF53383">
    <property type="entry name" value="PLP-dependent transferases"/>
    <property type="match status" value="1"/>
</dbReference>
<dbReference type="PROSITE" id="PS00595">
    <property type="entry name" value="AA_TRANSFER_CLASS_5"/>
    <property type="match status" value="1"/>
</dbReference>
<evidence type="ECO:0000250" key="1">
    <source>
        <dbReference type="UniProtKB" id="O29689"/>
    </source>
</evidence>
<evidence type="ECO:0000250" key="2">
    <source>
        <dbReference type="UniProtKB" id="P05341"/>
    </source>
</evidence>
<evidence type="ECO:0000250" key="3">
    <source>
        <dbReference type="UniProtKB" id="P0A6B9"/>
    </source>
</evidence>
<evidence type="ECO:0000305" key="4"/>
<organism>
    <name type="scientific">Gluconacetobacter diazotrophicus (strain ATCC 49037 / DSM 5601 / CCUG 37298 / CIP 103539 / LMG 7603 / PAl5)</name>
    <dbReference type="NCBI Taxonomy" id="272568"/>
    <lineage>
        <taxon>Bacteria</taxon>
        <taxon>Pseudomonadati</taxon>
        <taxon>Pseudomonadota</taxon>
        <taxon>Alphaproteobacteria</taxon>
        <taxon>Acetobacterales</taxon>
        <taxon>Acetobacteraceae</taxon>
        <taxon>Gluconacetobacter</taxon>
    </lineage>
</organism>
<comment type="function">
    <text evidence="2">Catalyzes the removal of elemental sulfur atoms from cysteine to produce alanine. Seems to participate in the biosynthesis of the nitrogenase metalloclusters by providing the inorganic sulfur required for the Fe-S core formation.</text>
</comment>
<comment type="catalytic activity">
    <reaction evidence="2">
        <text>(sulfur carrier)-H + L-cysteine = (sulfur carrier)-SH + L-alanine</text>
        <dbReference type="Rhea" id="RHEA:43892"/>
        <dbReference type="Rhea" id="RHEA-COMP:14737"/>
        <dbReference type="Rhea" id="RHEA-COMP:14739"/>
        <dbReference type="ChEBI" id="CHEBI:29917"/>
        <dbReference type="ChEBI" id="CHEBI:35235"/>
        <dbReference type="ChEBI" id="CHEBI:57972"/>
        <dbReference type="ChEBI" id="CHEBI:64428"/>
        <dbReference type="EC" id="2.8.1.7"/>
    </reaction>
</comment>
<comment type="cofactor">
    <cofactor evidence="2">
        <name>pyridoxal 5'-phosphate</name>
        <dbReference type="ChEBI" id="CHEBI:597326"/>
    </cofactor>
</comment>
<comment type="subunit">
    <text evidence="2">Homodimer.</text>
</comment>
<comment type="similarity">
    <text evidence="4">Belongs to the class-V pyridoxal-phosphate-dependent aminotransferase family. NifS/IscS subfamily.</text>
</comment>
<feature type="chain" id="PRO_0000150245" description="Cysteine desulfurase">
    <location>
        <begin position="1"/>
        <end position="400"/>
    </location>
</feature>
<feature type="active site" description="Cysteine persulfide intermediate" evidence="2">
    <location>
        <position position="326"/>
    </location>
</feature>
<feature type="binding site" evidence="3">
    <location>
        <begin position="72"/>
        <end position="73"/>
    </location>
    <ligand>
        <name>pyridoxal 5'-phosphate</name>
        <dbReference type="ChEBI" id="CHEBI:597326"/>
    </ligand>
</feature>
<feature type="binding site" evidence="1">
    <location>
        <position position="152"/>
    </location>
    <ligand>
        <name>pyridoxal 5'-phosphate</name>
        <dbReference type="ChEBI" id="CHEBI:597326"/>
    </ligand>
</feature>
<feature type="binding site" evidence="3">
    <location>
        <position position="180"/>
    </location>
    <ligand>
        <name>pyridoxal 5'-phosphate</name>
        <dbReference type="ChEBI" id="CHEBI:597326"/>
    </ligand>
</feature>
<feature type="binding site" evidence="3">
    <location>
        <begin position="200"/>
        <end position="202"/>
    </location>
    <ligand>
        <name>pyridoxal 5'-phosphate</name>
        <dbReference type="ChEBI" id="CHEBI:597326"/>
    </ligand>
</feature>
<feature type="binding site" evidence="3">
    <location>
        <position position="238"/>
    </location>
    <ligand>
        <name>pyridoxal 5'-phosphate</name>
        <dbReference type="ChEBI" id="CHEBI:597326"/>
    </ligand>
</feature>
<feature type="binding site" description="via persulfide group" evidence="1">
    <location>
        <position position="326"/>
    </location>
    <ligand>
        <name>[2Fe-2S] cluster</name>
        <dbReference type="ChEBI" id="CHEBI:190135"/>
    </ligand>
</feature>
<feature type="modified residue" description="N6-(pyridoxal phosphate)lysine" evidence="3">
    <location>
        <position position="203"/>
    </location>
</feature>
<gene>
    <name evidence="2" type="primary">nifS</name>
    <name type="ordered locus">GDI0448</name>
    <name type="ordered locus">Gdia_1558</name>
</gene>
<accession>P57794</accession>
<accession>A9H5Y9</accession>
<accession>B5ZJD7</accession>
<accession>Q9FA13</accession>
<keyword id="KW-0408">Iron</keyword>
<keyword id="KW-0411">Iron-sulfur</keyword>
<keyword id="KW-0479">Metal-binding</keyword>
<keyword id="KW-0535">Nitrogen fixation</keyword>
<keyword id="KW-0663">Pyridoxal phosphate</keyword>
<keyword id="KW-1185">Reference proteome</keyword>
<keyword id="KW-0808">Transferase</keyword>
<sequence length="400" mass="42978">MNAVYLDNNATTRVDPAAVSAMLPFFTEQFGNASSMHAFGAEVGGALHTARRQLQALLGAEFDHEIVYTAGGTESDNTAILSALETQAGRNEIVTSAVEHPAVLALCAWLEKTRGTRVHYIGVDARGRLDIDAYRRALSPRTAIASIMWANNETGTIFPVETLAAVAHEAGALFHTDAVQAVGKIPMNLRHSEIDMLSLSGHKLHAPKGIGALYVRRGVRLRPLIRGGHQERGRRAGTENVPGIIGLGVAAELARHHIDEENTRVRALRDRLEQGLLERIGNAWVTGDTENRLPNTANVAFEFIEGEAILLLMNKAGIAASSGSACTSGSLEPSHVLRAMHVPYTAAHGAIRFSFSRENTDADVDRVLDVMPGIIAKLREMSPFWDGAAAAKSGFAPTYA</sequence>
<proteinExistence type="inferred from homology"/>
<name>NIFS_GLUDA</name>